<organism>
    <name type="scientific">Yersinia enterocolitica serotype O:8 / biotype 1B (strain NCTC 13174 / 8081)</name>
    <dbReference type="NCBI Taxonomy" id="393305"/>
    <lineage>
        <taxon>Bacteria</taxon>
        <taxon>Pseudomonadati</taxon>
        <taxon>Pseudomonadota</taxon>
        <taxon>Gammaproteobacteria</taxon>
        <taxon>Enterobacterales</taxon>
        <taxon>Yersiniaceae</taxon>
        <taxon>Yersinia</taxon>
    </lineage>
</organism>
<reference key="1">
    <citation type="journal article" date="2006" name="PLoS Genet.">
        <title>The complete genome sequence and comparative genome analysis of the high pathogenicity Yersinia enterocolitica strain 8081.</title>
        <authorList>
            <person name="Thomson N.R."/>
            <person name="Howard S."/>
            <person name="Wren B.W."/>
            <person name="Holden M.T.G."/>
            <person name="Crossman L."/>
            <person name="Challis G.L."/>
            <person name="Churcher C."/>
            <person name="Mungall K."/>
            <person name="Brooks K."/>
            <person name="Chillingworth T."/>
            <person name="Feltwell T."/>
            <person name="Abdellah Z."/>
            <person name="Hauser H."/>
            <person name="Jagels K."/>
            <person name="Maddison M."/>
            <person name="Moule S."/>
            <person name="Sanders M."/>
            <person name="Whitehead S."/>
            <person name="Quail M.A."/>
            <person name="Dougan G."/>
            <person name="Parkhill J."/>
            <person name="Prentice M.B."/>
        </authorList>
    </citation>
    <scope>NUCLEOTIDE SEQUENCE [LARGE SCALE GENOMIC DNA]</scope>
    <source>
        <strain>NCTC 13174 / 8081</strain>
    </source>
</reference>
<name>TNAA_YERE8</name>
<keyword id="KW-0456">Lyase</keyword>
<keyword id="KW-0663">Pyridoxal phosphate</keyword>
<keyword id="KW-0823">Tryptophan catabolism</keyword>
<comment type="catalytic activity">
    <reaction evidence="1">
        <text>L-tryptophan + H2O = indole + pyruvate + NH4(+)</text>
        <dbReference type="Rhea" id="RHEA:19553"/>
        <dbReference type="ChEBI" id="CHEBI:15361"/>
        <dbReference type="ChEBI" id="CHEBI:15377"/>
        <dbReference type="ChEBI" id="CHEBI:16881"/>
        <dbReference type="ChEBI" id="CHEBI:28938"/>
        <dbReference type="ChEBI" id="CHEBI:57912"/>
        <dbReference type="EC" id="4.1.99.1"/>
    </reaction>
</comment>
<comment type="cofactor">
    <cofactor evidence="1">
        <name>pyridoxal 5'-phosphate</name>
        <dbReference type="ChEBI" id="CHEBI:597326"/>
    </cofactor>
</comment>
<comment type="pathway">
    <text evidence="1">Amino-acid degradation; L-tryptophan degradation via pyruvate pathway; indole and pyruvate from L-tryptophan: step 1/1.</text>
</comment>
<comment type="subunit">
    <text evidence="1">Homotetramer.</text>
</comment>
<comment type="similarity">
    <text evidence="1">Belongs to the beta-eliminating lyase family.</text>
</comment>
<protein>
    <recommendedName>
        <fullName evidence="1">Tryptophanase</fullName>
        <ecNumber evidence="1">4.1.99.1</ecNumber>
    </recommendedName>
    <alternativeName>
        <fullName evidence="1">L-tryptophan indole-lyase</fullName>
        <shortName evidence="1">TNase</shortName>
    </alternativeName>
</protein>
<accession>A1JJH3</accession>
<dbReference type="EC" id="4.1.99.1" evidence="1"/>
<dbReference type="EMBL" id="AM286415">
    <property type="protein sequence ID" value="CAL10761.1"/>
    <property type="molecule type" value="Genomic_DNA"/>
</dbReference>
<dbReference type="RefSeq" id="WP_005167041.1">
    <property type="nucleotide sequence ID" value="NC_008800.1"/>
</dbReference>
<dbReference type="RefSeq" id="YP_001005001.1">
    <property type="nucleotide sequence ID" value="NC_008800.1"/>
</dbReference>
<dbReference type="SMR" id="A1JJH3"/>
<dbReference type="KEGG" id="yen:YE0650"/>
<dbReference type="PATRIC" id="fig|393305.7.peg.744"/>
<dbReference type="eggNOG" id="COG3033">
    <property type="taxonomic scope" value="Bacteria"/>
</dbReference>
<dbReference type="HOGENOM" id="CLU_047223_0_0_6"/>
<dbReference type="OrthoDB" id="9764079at2"/>
<dbReference type="UniPathway" id="UPA00332">
    <property type="reaction ID" value="UER00452"/>
</dbReference>
<dbReference type="Proteomes" id="UP000000642">
    <property type="component" value="Chromosome"/>
</dbReference>
<dbReference type="GO" id="GO:0009034">
    <property type="term" value="F:tryptophanase activity"/>
    <property type="evidence" value="ECO:0007669"/>
    <property type="project" value="UniProtKB-UniRule"/>
</dbReference>
<dbReference type="CDD" id="cd00617">
    <property type="entry name" value="Tnase_like"/>
    <property type="match status" value="1"/>
</dbReference>
<dbReference type="Gene3D" id="3.90.1150.10">
    <property type="entry name" value="Aspartate Aminotransferase, domain 1"/>
    <property type="match status" value="1"/>
</dbReference>
<dbReference type="Gene3D" id="3.40.640.10">
    <property type="entry name" value="Type I PLP-dependent aspartate aminotransferase-like (Major domain)"/>
    <property type="match status" value="1"/>
</dbReference>
<dbReference type="HAMAP" id="MF_00544">
    <property type="entry name" value="Tryptophanase"/>
    <property type="match status" value="1"/>
</dbReference>
<dbReference type="InterPro" id="IPR001597">
    <property type="entry name" value="ArAA_b-elim_lyase/Thr_aldolase"/>
</dbReference>
<dbReference type="InterPro" id="IPR011166">
    <property type="entry name" value="Beta-eliminating_lyase"/>
</dbReference>
<dbReference type="InterPro" id="IPR015424">
    <property type="entry name" value="PyrdxlP-dep_Trfase"/>
</dbReference>
<dbReference type="InterPro" id="IPR015421">
    <property type="entry name" value="PyrdxlP-dep_Trfase_major"/>
</dbReference>
<dbReference type="InterPro" id="IPR015422">
    <property type="entry name" value="PyrdxlP-dep_Trfase_small"/>
</dbReference>
<dbReference type="InterPro" id="IPR013440">
    <property type="entry name" value="TNase"/>
</dbReference>
<dbReference type="InterPro" id="IPR018176">
    <property type="entry name" value="Tryptophanase_CS"/>
</dbReference>
<dbReference type="NCBIfam" id="NF009709">
    <property type="entry name" value="PRK13238.1"/>
    <property type="match status" value="1"/>
</dbReference>
<dbReference type="NCBIfam" id="TIGR02617">
    <property type="entry name" value="tnaA_trp_ase"/>
    <property type="match status" value="1"/>
</dbReference>
<dbReference type="PANTHER" id="PTHR32325">
    <property type="entry name" value="BETA-ELIMINATING LYASE-LIKE PROTEIN-RELATED"/>
    <property type="match status" value="1"/>
</dbReference>
<dbReference type="PANTHER" id="PTHR32325:SF4">
    <property type="entry name" value="TRYPTOPHANASE"/>
    <property type="match status" value="1"/>
</dbReference>
<dbReference type="Pfam" id="PF01212">
    <property type="entry name" value="Beta_elim_lyase"/>
    <property type="match status" value="1"/>
</dbReference>
<dbReference type="PIRSF" id="PIRSF001386">
    <property type="entry name" value="Trpase"/>
    <property type="match status" value="1"/>
</dbReference>
<dbReference type="SUPFAM" id="SSF53383">
    <property type="entry name" value="PLP-dependent transferases"/>
    <property type="match status" value="1"/>
</dbReference>
<dbReference type="PROSITE" id="PS00853">
    <property type="entry name" value="BETA_ELIM_LYASE"/>
    <property type="match status" value="1"/>
</dbReference>
<gene>
    <name evidence="1" type="primary">tnaA</name>
    <name type="ordered locus">YE0650</name>
</gene>
<sequence>MKRIPEPFRIKMVENIRMTNREDREKALIEAGYNPFLLPSEDVYIDLLTDSGTGAMSDRQWAGLMMGDEAYAGSRNYYHLCDQVKKLIGYPFTIPTHQGRGAEQILFPCLIAKKQKAGGAKNPVFISNFHFDTTAAHVEMNGAKAINVVTPKAFDTVAYYDWKGDFDLDQLKATIAEYGADNVVSIITTVTCNSSGGQPISMSNMREVYRIAQQHNIPVVIDSARFCENAWFIKQREPGYSDKSIKEIILEMYQYGDMLTMSAKKDPMVNIGGLCCFRTDEDLFNDVRIRCVPMEGFVTYGGLAGRDMEALAIGLEEGMNEDFLTYRIGQVEYLGERLRAGGIPIQYPTGGHAVFVDAKILLPHIPAEQFPAQALNNALYLEAGIRSVEIGSLLLGRDPQTGKQKPSPLELLRLTIPRRVYTNDHMDYIADALISLKSRAEEIKGLTFTYEPPVLRHFVARLKPIE</sequence>
<feature type="chain" id="PRO_1000017735" description="Tryptophanase">
    <location>
        <begin position="1"/>
        <end position="466"/>
    </location>
</feature>
<feature type="modified residue" description="N6-(pyridoxal phosphate)lysine" evidence="1">
    <location>
        <position position="265"/>
    </location>
</feature>
<proteinExistence type="inferred from homology"/>
<evidence type="ECO:0000255" key="1">
    <source>
        <dbReference type="HAMAP-Rule" id="MF_00544"/>
    </source>
</evidence>